<accession>Q9Z7Y2</accession>
<accession>Q9JQ53</accession>
<dbReference type="EC" id="2.5.1.7" evidence="1"/>
<dbReference type="EMBL" id="AE001363">
    <property type="protein sequence ID" value="AAD18711.1"/>
    <property type="molecule type" value="Genomic_DNA"/>
</dbReference>
<dbReference type="EMBL" id="AE002161">
    <property type="protein sequence ID" value="AAF38052.1"/>
    <property type="molecule type" value="Genomic_DNA"/>
</dbReference>
<dbReference type="EMBL" id="BA000008">
    <property type="protein sequence ID" value="BAA98777.1"/>
    <property type="molecule type" value="Genomic_DNA"/>
</dbReference>
<dbReference type="EMBL" id="AE009440">
    <property type="protein sequence ID" value="AAP98522.1"/>
    <property type="molecule type" value="Genomic_DNA"/>
</dbReference>
<dbReference type="PIR" id="D72063">
    <property type="entry name" value="D72063"/>
</dbReference>
<dbReference type="PIR" id="G86561">
    <property type="entry name" value="G86561"/>
</dbReference>
<dbReference type="RefSeq" id="NP_224767.1">
    <property type="nucleotide sequence ID" value="NC_000922.1"/>
</dbReference>
<dbReference type="RefSeq" id="WP_010883209.1">
    <property type="nucleotide sequence ID" value="NZ_LN847257.1"/>
</dbReference>
<dbReference type="SMR" id="Q9Z7Y2"/>
<dbReference type="STRING" id="406984.CPK_ORF01087"/>
<dbReference type="GeneID" id="45050615"/>
<dbReference type="KEGG" id="cpa:CP_0178"/>
<dbReference type="KEGG" id="cpj:murA"/>
<dbReference type="KEGG" id="cpn:CPn_0571"/>
<dbReference type="KEGG" id="cpt:CpB0592"/>
<dbReference type="PATRIC" id="fig|115713.3.peg.636"/>
<dbReference type="eggNOG" id="COG0766">
    <property type="taxonomic scope" value="Bacteria"/>
</dbReference>
<dbReference type="HOGENOM" id="CLU_027387_0_0_0"/>
<dbReference type="OrthoDB" id="9803760at2"/>
<dbReference type="UniPathway" id="UPA00219"/>
<dbReference type="Proteomes" id="UP000000583">
    <property type="component" value="Chromosome"/>
</dbReference>
<dbReference type="Proteomes" id="UP000000801">
    <property type="component" value="Chromosome"/>
</dbReference>
<dbReference type="GO" id="GO:0005737">
    <property type="term" value="C:cytoplasm"/>
    <property type="evidence" value="ECO:0007669"/>
    <property type="project" value="UniProtKB-SubCell"/>
</dbReference>
<dbReference type="GO" id="GO:0008760">
    <property type="term" value="F:UDP-N-acetylglucosamine 1-carboxyvinyltransferase activity"/>
    <property type="evidence" value="ECO:0007669"/>
    <property type="project" value="UniProtKB-UniRule"/>
</dbReference>
<dbReference type="GO" id="GO:0051301">
    <property type="term" value="P:cell division"/>
    <property type="evidence" value="ECO:0007669"/>
    <property type="project" value="UniProtKB-KW"/>
</dbReference>
<dbReference type="GO" id="GO:0071555">
    <property type="term" value="P:cell wall organization"/>
    <property type="evidence" value="ECO:0007669"/>
    <property type="project" value="UniProtKB-KW"/>
</dbReference>
<dbReference type="GO" id="GO:0009252">
    <property type="term" value="P:peptidoglycan biosynthetic process"/>
    <property type="evidence" value="ECO:0007669"/>
    <property type="project" value="UniProtKB-UniRule"/>
</dbReference>
<dbReference type="GO" id="GO:0008360">
    <property type="term" value="P:regulation of cell shape"/>
    <property type="evidence" value="ECO:0007669"/>
    <property type="project" value="UniProtKB-KW"/>
</dbReference>
<dbReference type="GO" id="GO:0019277">
    <property type="term" value="P:UDP-N-acetylgalactosamine biosynthetic process"/>
    <property type="evidence" value="ECO:0007669"/>
    <property type="project" value="InterPro"/>
</dbReference>
<dbReference type="CDD" id="cd01555">
    <property type="entry name" value="UdpNAET"/>
    <property type="match status" value="1"/>
</dbReference>
<dbReference type="Gene3D" id="3.65.10.10">
    <property type="entry name" value="Enolpyruvate transferase domain"/>
    <property type="match status" value="2"/>
</dbReference>
<dbReference type="HAMAP" id="MF_00111">
    <property type="entry name" value="MurA"/>
    <property type="match status" value="1"/>
</dbReference>
<dbReference type="InterPro" id="IPR001986">
    <property type="entry name" value="Enolpyruvate_Tfrase_dom"/>
</dbReference>
<dbReference type="InterPro" id="IPR036968">
    <property type="entry name" value="Enolpyruvate_Tfrase_sf"/>
</dbReference>
<dbReference type="InterPro" id="IPR050068">
    <property type="entry name" value="MurA_subfamily"/>
</dbReference>
<dbReference type="InterPro" id="IPR013792">
    <property type="entry name" value="RNA3'P_cycl/enolpyr_Trfase_a/b"/>
</dbReference>
<dbReference type="InterPro" id="IPR005750">
    <property type="entry name" value="UDP_GlcNAc_COvinyl_MurA"/>
</dbReference>
<dbReference type="NCBIfam" id="TIGR01072">
    <property type="entry name" value="murA"/>
    <property type="match status" value="1"/>
</dbReference>
<dbReference type="NCBIfam" id="NF006873">
    <property type="entry name" value="PRK09369.1"/>
    <property type="match status" value="1"/>
</dbReference>
<dbReference type="PANTHER" id="PTHR43783">
    <property type="entry name" value="UDP-N-ACETYLGLUCOSAMINE 1-CARBOXYVINYLTRANSFERASE"/>
    <property type="match status" value="1"/>
</dbReference>
<dbReference type="PANTHER" id="PTHR43783:SF1">
    <property type="entry name" value="UDP-N-ACETYLGLUCOSAMINE 1-CARBOXYVINYLTRANSFERASE"/>
    <property type="match status" value="1"/>
</dbReference>
<dbReference type="Pfam" id="PF00275">
    <property type="entry name" value="EPSP_synthase"/>
    <property type="match status" value="1"/>
</dbReference>
<dbReference type="SUPFAM" id="SSF55205">
    <property type="entry name" value="EPT/RTPC-like"/>
    <property type="match status" value="1"/>
</dbReference>
<proteinExistence type="inferred from homology"/>
<sequence length="458" mass="49330">MQIAQVFGCGRLNGEVKVSGAKNAATKLLVASLLSDQKCTLRNVPDIGDVSLTVELCKSLGAHVSWDKETEVLEIYTPEIQCTRVPPTFSNVNRIPILLLGALLGRCPEGVYVPTVGGDAIGERTLNFHFEGLKQLGVQISSDSSGYYAKAPRGLKGNYIHLPYPSVGATENLILAAIHAKGRTVIKNVALEAEILDLVLFLQKAGADITTDNDRTIDIFGTGGLGSVDHTILPDKIEAASFGMAAVVSGGRVFVRNAKQELLIPFLKMLRSIGGGFLVSESGIEFFQERPLVGGVVLETDVHPGFLTDWQQPFAVLLSQAQGSSVIHETVHENRLGYLHGLQHMGAECQLFHQCLSTKACRYAIGNFPHSAVIHGATPLWASHLVIPDLRAGFAYVMAALIAEGGGSIIENTHLLDRGYTNWVGKLRSLGAKIQIFDMEQEELTTSPKSLALRDASL</sequence>
<keyword id="KW-0131">Cell cycle</keyword>
<keyword id="KW-0132">Cell division</keyword>
<keyword id="KW-0133">Cell shape</keyword>
<keyword id="KW-0961">Cell wall biogenesis/degradation</keyword>
<keyword id="KW-0963">Cytoplasm</keyword>
<keyword id="KW-0573">Peptidoglycan synthesis</keyword>
<keyword id="KW-0808">Transferase</keyword>
<comment type="function">
    <text evidence="1">Cell wall formation. Adds enolpyruvyl to UDP-N-acetylglucosamine.</text>
</comment>
<comment type="catalytic activity">
    <reaction evidence="1">
        <text>phosphoenolpyruvate + UDP-N-acetyl-alpha-D-glucosamine = UDP-N-acetyl-3-O-(1-carboxyvinyl)-alpha-D-glucosamine + phosphate</text>
        <dbReference type="Rhea" id="RHEA:18681"/>
        <dbReference type="ChEBI" id="CHEBI:43474"/>
        <dbReference type="ChEBI" id="CHEBI:57705"/>
        <dbReference type="ChEBI" id="CHEBI:58702"/>
        <dbReference type="ChEBI" id="CHEBI:68483"/>
        <dbReference type="EC" id="2.5.1.7"/>
    </reaction>
</comment>
<comment type="pathway">
    <text evidence="1">Cell wall biogenesis; peptidoglycan biosynthesis.</text>
</comment>
<comment type="subcellular location">
    <subcellularLocation>
        <location evidence="1">Cytoplasm</location>
    </subcellularLocation>
</comment>
<comment type="similarity">
    <text evidence="1">Belongs to the EPSP synthase family. MurA subfamily.</text>
</comment>
<protein>
    <recommendedName>
        <fullName evidence="1">UDP-N-acetylglucosamine 1-carboxyvinyltransferase</fullName>
        <ecNumber evidence="1">2.5.1.7</ecNumber>
    </recommendedName>
    <alternativeName>
        <fullName evidence="1">Enoylpyruvate transferase</fullName>
    </alternativeName>
    <alternativeName>
        <fullName evidence="1">UDP-N-acetylglucosamine enolpyruvyl transferase</fullName>
        <shortName evidence="1">EPT</shortName>
    </alternativeName>
</protein>
<feature type="chain" id="PRO_0000178860" description="UDP-N-acetylglucosamine 1-carboxyvinyltransferase">
    <location>
        <begin position="1"/>
        <end position="458"/>
    </location>
</feature>
<feature type="active site" description="Proton donor" evidence="1">
    <location>
        <position position="119"/>
    </location>
</feature>
<feature type="binding site" evidence="1">
    <location>
        <begin position="22"/>
        <end position="23"/>
    </location>
    <ligand>
        <name>phosphoenolpyruvate</name>
        <dbReference type="ChEBI" id="CHEBI:58702"/>
    </ligand>
</feature>
<feature type="binding site" evidence="1">
    <location>
        <position position="94"/>
    </location>
    <ligand>
        <name>UDP-N-acetyl-alpha-D-glucosamine</name>
        <dbReference type="ChEBI" id="CHEBI:57705"/>
    </ligand>
</feature>
<feature type="binding site" evidence="1">
    <location>
        <position position="309"/>
    </location>
    <ligand>
        <name>UDP-N-acetyl-alpha-D-glucosamine</name>
        <dbReference type="ChEBI" id="CHEBI:57705"/>
    </ligand>
</feature>
<feature type="binding site" evidence="1">
    <location>
        <position position="331"/>
    </location>
    <ligand>
        <name>UDP-N-acetyl-alpha-D-glucosamine</name>
        <dbReference type="ChEBI" id="CHEBI:57705"/>
    </ligand>
</feature>
<reference key="1">
    <citation type="journal article" date="1999" name="Nat. Genet.">
        <title>Comparative genomes of Chlamydia pneumoniae and C. trachomatis.</title>
        <authorList>
            <person name="Kalman S."/>
            <person name="Mitchell W.P."/>
            <person name="Marathe R."/>
            <person name="Lammel C.J."/>
            <person name="Fan J."/>
            <person name="Hyman R.W."/>
            <person name="Olinger L."/>
            <person name="Grimwood J."/>
            <person name="Davis R.W."/>
            <person name="Stephens R.S."/>
        </authorList>
    </citation>
    <scope>NUCLEOTIDE SEQUENCE [LARGE SCALE GENOMIC DNA]</scope>
    <source>
        <strain>CWL029</strain>
    </source>
</reference>
<reference key="2">
    <citation type="journal article" date="2000" name="Nucleic Acids Res.">
        <title>Genome sequences of Chlamydia trachomatis MoPn and Chlamydia pneumoniae AR39.</title>
        <authorList>
            <person name="Read T.D."/>
            <person name="Brunham R.C."/>
            <person name="Shen C."/>
            <person name="Gill S.R."/>
            <person name="Heidelberg J.F."/>
            <person name="White O."/>
            <person name="Hickey E.K."/>
            <person name="Peterson J.D."/>
            <person name="Utterback T.R."/>
            <person name="Berry K.J."/>
            <person name="Bass S."/>
            <person name="Linher K.D."/>
            <person name="Weidman J.F."/>
            <person name="Khouri H.M."/>
            <person name="Craven B."/>
            <person name="Bowman C."/>
            <person name="Dodson R.J."/>
            <person name="Gwinn M.L."/>
            <person name="Nelson W.C."/>
            <person name="DeBoy R.T."/>
            <person name="Kolonay J.F."/>
            <person name="McClarty G."/>
            <person name="Salzberg S.L."/>
            <person name="Eisen J.A."/>
            <person name="Fraser C.M."/>
        </authorList>
    </citation>
    <scope>NUCLEOTIDE SEQUENCE [LARGE SCALE GENOMIC DNA]</scope>
    <source>
        <strain>AR39</strain>
    </source>
</reference>
<reference key="3">
    <citation type="journal article" date="2000" name="Nucleic Acids Res.">
        <title>Comparison of whole genome sequences of Chlamydia pneumoniae J138 from Japan and CWL029 from USA.</title>
        <authorList>
            <person name="Shirai M."/>
            <person name="Hirakawa H."/>
            <person name="Kimoto M."/>
            <person name="Tabuchi M."/>
            <person name="Kishi F."/>
            <person name="Ouchi K."/>
            <person name="Shiba T."/>
            <person name="Ishii K."/>
            <person name="Hattori M."/>
            <person name="Kuhara S."/>
            <person name="Nakazawa T."/>
        </authorList>
    </citation>
    <scope>NUCLEOTIDE SEQUENCE [LARGE SCALE GENOMIC DNA]</scope>
    <source>
        <strain>J138</strain>
    </source>
</reference>
<reference key="4">
    <citation type="submission" date="2002-05" db="EMBL/GenBank/DDBJ databases">
        <title>The genome sequence of Chlamydia pneumoniae TW183 and comparison with other Chlamydia strains based on whole genome sequence analysis.</title>
        <authorList>
            <person name="Geng M.M."/>
            <person name="Schuhmacher A."/>
            <person name="Muehldorfer I."/>
            <person name="Bensch K.W."/>
            <person name="Schaefer K.P."/>
            <person name="Schneider S."/>
            <person name="Pohl T."/>
            <person name="Essig A."/>
            <person name="Marre R."/>
            <person name="Melchers K."/>
        </authorList>
    </citation>
    <scope>NUCLEOTIDE SEQUENCE [LARGE SCALE GENOMIC DNA]</scope>
    <source>
        <strain>TW-183</strain>
    </source>
</reference>
<evidence type="ECO:0000255" key="1">
    <source>
        <dbReference type="HAMAP-Rule" id="MF_00111"/>
    </source>
</evidence>
<name>MURA_CHLPN</name>
<organism>
    <name type="scientific">Chlamydia pneumoniae</name>
    <name type="common">Chlamydophila pneumoniae</name>
    <dbReference type="NCBI Taxonomy" id="83558"/>
    <lineage>
        <taxon>Bacteria</taxon>
        <taxon>Pseudomonadati</taxon>
        <taxon>Chlamydiota</taxon>
        <taxon>Chlamydiia</taxon>
        <taxon>Chlamydiales</taxon>
        <taxon>Chlamydiaceae</taxon>
        <taxon>Chlamydia/Chlamydophila group</taxon>
        <taxon>Chlamydia</taxon>
    </lineage>
</organism>
<gene>
    <name evidence="1" type="primary">murA</name>
    <name type="ordered locus">CPn_0571</name>
    <name type="ordered locus">CP_0178</name>
    <name type="ordered locus">CpB0592</name>
</gene>